<evidence type="ECO:0000255" key="1">
    <source>
        <dbReference type="HAMAP-Rule" id="MF_00107"/>
    </source>
</evidence>
<proteinExistence type="inferred from homology"/>
<comment type="function">
    <text evidence="1">Involved in the biosynthesis of isopentenyl diphosphate (IPP) and dimethylallyl diphosphate (DMAPP), two major building blocks of isoprenoid compounds. Catalyzes the conversion of 4-diphosphocytidyl-2-C-methyl-D-erythritol 2-phosphate (CDP-ME2P) to 2-C-methyl-D-erythritol 2,4-cyclodiphosphate (ME-CPP) with a corresponding release of cytidine 5-monophosphate (CMP).</text>
</comment>
<comment type="catalytic activity">
    <reaction evidence="1">
        <text>4-CDP-2-C-methyl-D-erythritol 2-phosphate = 2-C-methyl-D-erythritol 2,4-cyclic diphosphate + CMP</text>
        <dbReference type="Rhea" id="RHEA:23864"/>
        <dbReference type="ChEBI" id="CHEBI:57919"/>
        <dbReference type="ChEBI" id="CHEBI:58483"/>
        <dbReference type="ChEBI" id="CHEBI:60377"/>
        <dbReference type="EC" id="4.6.1.12"/>
    </reaction>
</comment>
<comment type="cofactor">
    <cofactor evidence="1">
        <name>a divalent metal cation</name>
        <dbReference type="ChEBI" id="CHEBI:60240"/>
    </cofactor>
    <text evidence="1">Binds 1 divalent metal cation per subunit.</text>
</comment>
<comment type="pathway">
    <text evidence="1">Isoprenoid biosynthesis; isopentenyl diphosphate biosynthesis via DXP pathway; isopentenyl diphosphate from 1-deoxy-D-xylulose 5-phosphate: step 4/6.</text>
</comment>
<comment type="subunit">
    <text evidence="1">Homotrimer.</text>
</comment>
<comment type="similarity">
    <text evidence="1">Belongs to the IspF family.</text>
</comment>
<reference key="1">
    <citation type="journal article" date="2014" name="Stand. Genomic Sci.">
        <title>Complete genome sequence of Burkholderia phymatum STM815(T), a broad host range and efficient nitrogen-fixing symbiont of Mimosa species.</title>
        <authorList>
            <person name="Moulin L."/>
            <person name="Klonowska A."/>
            <person name="Caroline B."/>
            <person name="Booth K."/>
            <person name="Vriezen J.A."/>
            <person name="Melkonian R."/>
            <person name="James E.K."/>
            <person name="Young J.P."/>
            <person name="Bena G."/>
            <person name="Hauser L."/>
            <person name="Land M."/>
            <person name="Kyrpides N."/>
            <person name="Bruce D."/>
            <person name="Chain P."/>
            <person name="Copeland A."/>
            <person name="Pitluck S."/>
            <person name="Woyke T."/>
            <person name="Lizotte-Waniewski M."/>
            <person name="Bristow J."/>
            <person name="Riley M."/>
        </authorList>
    </citation>
    <scope>NUCLEOTIDE SEQUENCE [LARGE SCALE GENOMIC DNA]</scope>
    <source>
        <strain>DSM 17167 / CIP 108236 / LMG 21445 / STM815</strain>
    </source>
</reference>
<dbReference type="EC" id="4.6.1.12" evidence="1"/>
<dbReference type="EMBL" id="CP001043">
    <property type="protein sequence ID" value="ACC70188.1"/>
    <property type="molecule type" value="Genomic_DNA"/>
</dbReference>
<dbReference type="RefSeq" id="WP_012400405.1">
    <property type="nucleotide sequence ID" value="NC_010622.1"/>
</dbReference>
<dbReference type="SMR" id="B2JGK3"/>
<dbReference type="STRING" id="391038.Bphy_0999"/>
<dbReference type="KEGG" id="bph:Bphy_0999"/>
<dbReference type="eggNOG" id="COG0245">
    <property type="taxonomic scope" value="Bacteria"/>
</dbReference>
<dbReference type="HOGENOM" id="CLU_084630_2_0_4"/>
<dbReference type="OrthoDB" id="9804336at2"/>
<dbReference type="UniPathway" id="UPA00056">
    <property type="reaction ID" value="UER00095"/>
</dbReference>
<dbReference type="Proteomes" id="UP000001192">
    <property type="component" value="Chromosome 1"/>
</dbReference>
<dbReference type="GO" id="GO:0008685">
    <property type="term" value="F:2-C-methyl-D-erythritol 2,4-cyclodiphosphate synthase activity"/>
    <property type="evidence" value="ECO:0007669"/>
    <property type="project" value="UniProtKB-UniRule"/>
</dbReference>
<dbReference type="GO" id="GO:0046872">
    <property type="term" value="F:metal ion binding"/>
    <property type="evidence" value="ECO:0007669"/>
    <property type="project" value="UniProtKB-KW"/>
</dbReference>
<dbReference type="GO" id="GO:0019288">
    <property type="term" value="P:isopentenyl diphosphate biosynthetic process, methylerythritol 4-phosphate pathway"/>
    <property type="evidence" value="ECO:0007669"/>
    <property type="project" value="UniProtKB-UniRule"/>
</dbReference>
<dbReference type="GO" id="GO:0016114">
    <property type="term" value="P:terpenoid biosynthetic process"/>
    <property type="evidence" value="ECO:0007669"/>
    <property type="project" value="InterPro"/>
</dbReference>
<dbReference type="CDD" id="cd00554">
    <property type="entry name" value="MECDP_synthase"/>
    <property type="match status" value="1"/>
</dbReference>
<dbReference type="FunFam" id="3.30.1330.50:FF:000001">
    <property type="entry name" value="2-C-methyl-D-erythritol 2,4-cyclodiphosphate synthase"/>
    <property type="match status" value="1"/>
</dbReference>
<dbReference type="Gene3D" id="3.30.1330.50">
    <property type="entry name" value="2-C-methyl-D-erythritol 2,4-cyclodiphosphate synthase"/>
    <property type="match status" value="1"/>
</dbReference>
<dbReference type="HAMAP" id="MF_00107">
    <property type="entry name" value="IspF"/>
    <property type="match status" value="1"/>
</dbReference>
<dbReference type="InterPro" id="IPR003526">
    <property type="entry name" value="MECDP_synthase"/>
</dbReference>
<dbReference type="InterPro" id="IPR020555">
    <property type="entry name" value="MECDP_synthase_CS"/>
</dbReference>
<dbReference type="InterPro" id="IPR036571">
    <property type="entry name" value="MECDP_synthase_sf"/>
</dbReference>
<dbReference type="NCBIfam" id="TIGR00151">
    <property type="entry name" value="ispF"/>
    <property type="match status" value="1"/>
</dbReference>
<dbReference type="PANTHER" id="PTHR43181">
    <property type="entry name" value="2-C-METHYL-D-ERYTHRITOL 2,4-CYCLODIPHOSPHATE SYNTHASE, CHLOROPLASTIC"/>
    <property type="match status" value="1"/>
</dbReference>
<dbReference type="PANTHER" id="PTHR43181:SF1">
    <property type="entry name" value="2-C-METHYL-D-ERYTHRITOL 2,4-CYCLODIPHOSPHATE SYNTHASE, CHLOROPLASTIC"/>
    <property type="match status" value="1"/>
</dbReference>
<dbReference type="Pfam" id="PF02542">
    <property type="entry name" value="YgbB"/>
    <property type="match status" value="1"/>
</dbReference>
<dbReference type="SUPFAM" id="SSF69765">
    <property type="entry name" value="IpsF-like"/>
    <property type="match status" value="1"/>
</dbReference>
<dbReference type="PROSITE" id="PS01350">
    <property type="entry name" value="ISPF"/>
    <property type="match status" value="1"/>
</dbReference>
<sequence>MDLRIGQGYDVHALVPGRPLIIGGVTIPYERGLLGHSDADVLLHAITDALFGAAALGDIGRHFPDTATEFKGANSRVLLRECAARIARAGFTIQNVDSTVIAQAPKLAPHIDGMRANIAEDLNLPIDRVNVKAKTNEKLGYLGRGEGIEAQAAALLVRV</sequence>
<keyword id="KW-0414">Isoprene biosynthesis</keyword>
<keyword id="KW-0456">Lyase</keyword>
<keyword id="KW-0479">Metal-binding</keyword>
<keyword id="KW-1185">Reference proteome</keyword>
<gene>
    <name evidence="1" type="primary">ispF</name>
    <name type="ordered locus">Bphy_0999</name>
</gene>
<protein>
    <recommendedName>
        <fullName evidence="1">2-C-methyl-D-erythritol 2,4-cyclodiphosphate synthase</fullName>
        <shortName evidence="1">MECDP-synthase</shortName>
        <shortName evidence="1">MECPP-synthase</shortName>
        <shortName evidence="1">MECPS</shortName>
        <ecNumber evidence="1">4.6.1.12</ecNumber>
    </recommendedName>
</protein>
<name>ISPF_PARP8</name>
<feature type="chain" id="PRO_1000094245" description="2-C-methyl-D-erythritol 2,4-cyclodiphosphate synthase">
    <location>
        <begin position="1"/>
        <end position="159"/>
    </location>
</feature>
<feature type="binding site" evidence="1">
    <location>
        <begin position="10"/>
        <end position="12"/>
    </location>
    <ligand>
        <name>4-CDP-2-C-methyl-D-erythritol 2-phosphate</name>
        <dbReference type="ChEBI" id="CHEBI:57919"/>
    </ligand>
</feature>
<feature type="binding site" evidence="1">
    <location>
        <position position="10"/>
    </location>
    <ligand>
        <name>a divalent metal cation</name>
        <dbReference type="ChEBI" id="CHEBI:60240"/>
    </ligand>
</feature>
<feature type="binding site" evidence="1">
    <location>
        <position position="12"/>
    </location>
    <ligand>
        <name>a divalent metal cation</name>
        <dbReference type="ChEBI" id="CHEBI:60240"/>
    </ligand>
</feature>
<feature type="binding site" evidence="1">
    <location>
        <begin position="36"/>
        <end position="37"/>
    </location>
    <ligand>
        <name>4-CDP-2-C-methyl-D-erythritol 2-phosphate</name>
        <dbReference type="ChEBI" id="CHEBI:57919"/>
    </ligand>
</feature>
<feature type="binding site" evidence="1">
    <location>
        <position position="44"/>
    </location>
    <ligand>
        <name>a divalent metal cation</name>
        <dbReference type="ChEBI" id="CHEBI:60240"/>
    </ligand>
</feature>
<feature type="binding site" evidence="1">
    <location>
        <begin position="58"/>
        <end position="60"/>
    </location>
    <ligand>
        <name>4-CDP-2-C-methyl-D-erythritol 2-phosphate</name>
        <dbReference type="ChEBI" id="CHEBI:57919"/>
    </ligand>
</feature>
<feature type="binding site" evidence="1">
    <location>
        <position position="144"/>
    </location>
    <ligand>
        <name>4-CDP-2-C-methyl-D-erythritol 2-phosphate</name>
        <dbReference type="ChEBI" id="CHEBI:57919"/>
    </ligand>
</feature>
<feature type="site" description="Transition state stabilizer" evidence="1">
    <location>
        <position position="36"/>
    </location>
</feature>
<feature type="site" description="Transition state stabilizer" evidence="1">
    <location>
        <position position="135"/>
    </location>
</feature>
<accession>B2JGK3</accession>
<organism>
    <name type="scientific">Paraburkholderia phymatum (strain DSM 17167 / CIP 108236 / LMG 21445 / STM815)</name>
    <name type="common">Burkholderia phymatum</name>
    <dbReference type="NCBI Taxonomy" id="391038"/>
    <lineage>
        <taxon>Bacteria</taxon>
        <taxon>Pseudomonadati</taxon>
        <taxon>Pseudomonadota</taxon>
        <taxon>Betaproteobacteria</taxon>
        <taxon>Burkholderiales</taxon>
        <taxon>Burkholderiaceae</taxon>
        <taxon>Paraburkholderia</taxon>
    </lineage>
</organism>